<sequence length="395" mass="42922">MATVDRWLLPDGIEEVLPPEAARIEAARRQVLDLFQRWGYEFVVTPHIEYLESLLTGAGQDLDLRTFKVTDPLSGRQMGFRADITPQVARIDAHTLRREGPNRLCYAGSVLHAQPRALTTSRSPIQLGAELYGDASPASDIEVISLLVETLELAAVPDVHMDLGHVGIYRGLARAAGLSGEVEQQLFDALQRKAMDEIEALTAALPAGLGNMLRSLAELCGGREVLDLAQAALVEAPDAVHAALDELVAIADALELRYPELPLYFDLGELRGYNYHTGVVFAAFVPGEGGAIAQGGRYDDTGAVFGRARPATGFSTDLKTLVTLGDMRLDEAVRGVWAPDNHDLYLWQAVRRLRSEGERVVQALPGQSEADAREAGCDRLLALRDGRWQVAPLAS</sequence>
<evidence type="ECO:0000255" key="1">
    <source>
        <dbReference type="HAMAP-Rule" id="MF_00125"/>
    </source>
</evidence>
<reference key="1">
    <citation type="submission" date="2007-04" db="EMBL/GenBank/DDBJ databases">
        <title>Complete sequence of Pseudomonas mendocina ymp.</title>
        <authorList>
            <consortium name="US DOE Joint Genome Institute"/>
            <person name="Copeland A."/>
            <person name="Lucas S."/>
            <person name="Lapidus A."/>
            <person name="Barry K."/>
            <person name="Glavina del Rio T."/>
            <person name="Dalin E."/>
            <person name="Tice H."/>
            <person name="Pitluck S."/>
            <person name="Kiss H."/>
            <person name="Brettin T."/>
            <person name="Detter J.C."/>
            <person name="Bruce D."/>
            <person name="Han C."/>
            <person name="Schmutz J."/>
            <person name="Larimer F."/>
            <person name="Land M."/>
            <person name="Hauser L."/>
            <person name="Kyrpides N."/>
            <person name="Mikhailova N."/>
            <person name="Hersman L."/>
            <person name="Dubois J."/>
            <person name="Maurice P."/>
            <person name="Richardson P."/>
        </authorList>
    </citation>
    <scope>NUCLEOTIDE SEQUENCE [LARGE SCALE GENOMIC DNA]</scope>
    <source>
        <strain>ymp</strain>
    </source>
</reference>
<accession>A4XPZ2</accession>
<proteinExistence type="inferred from homology"/>
<feature type="chain" id="PRO_1000016278" description="ATP phosphoribosyltransferase regulatory subunit">
    <location>
        <begin position="1"/>
        <end position="395"/>
    </location>
</feature>
<comment type="function">
    <text evidence="1">Required for the first step of histidine biosynthesis. May allow the feedback regulation of ATP phosphoribosyltransferase activity by histidine.</text>
</comment>
<comment type="pathway">
    <text evidence="1">Amino-acid biosynthesis; L-histidine biosynthesis; L-histidine from 5-phospho-alpha-D-ribose 1-diphosphate: step 1/9.</text>
</comment>
<comment type="subunit">
    <text evidence="1">Heteromultimer composed of HisG and HisZ subunits.</text>
</comment>
<comment type="subcellular location">
    <subcellularLocation>
        <location evidence="1">Cytoplasm</location>
    </subcellularLocation>
</comment>
<comment type="miscellaneous">
    <text>This function is generally fulfilled by the C-terminal part of HisG, which is missing in some bacteria such as this one.</text>
</comment>
<comment type="similarity">
    <text evidence="1">Belongs to the class-II aminoacyl-tRNA synthetase family. HisZ subfamily.</text>
</comment>
<organism>
    <name type="scientific">Ectopseudomonas mendocina (strain ymp)</name>
    <name type="common">Pseudomonas mendocina</name>
    <dbReference type="NCBI Taxonomy" id="399739"/>
    <lineage>
        <taxon>Bacteria</taxon>
        <taxon>Pseudomonadati</taxon>
        <taxon>Pseudomonadota</taxon>
        <taxon>Gammaproteobacteria</taxon>
        <taxon>Pseudomonadales</taxon>
        <taxon>Pseudomonadaceae</taxon>
        <taxon>Ectopseudomonas</taxon>
    </lineage>
</organism>
<name>HISZ_ECTM1</name>
<dbReference type="EMBL" id="CP000680">
    <property type="protein sequence ID" value="ABP83408.1"/>
    <property type="molecule type" value="Genomic_DNA"/>
</dbReference>
<dbReference type="SMR" id="A4XPZ2"/>
<dbReference type="STRING" id="399739.Pmen_0640"/>
<dbReference type="KEGG" id="pmy:Pmen_0640"/>
<dbReference type="PATRIC" id="fig|399739.8.peg.647"/>
<dbReference type="eggNOG" id="COG3705">
    <property type="taxonomic scope" value="Bacteria"/>
</dbReference>
<dbReference type="HOGENOM" id="CLU_025113_0_1_6"/>
<dbReference type="OrthoDB" id="9769617at2"/>
<dbReference type="UniPathway" id="UPA00031">
    <property type="reaction ID" value="UER00006"/>
</dbReference>
<dbReference type="GO" id="GO:0005737">
    <property type="term" value="C:cytoplasm"/>
    <property type="evidence" value="ECO:0007669"/>
    <property type="project" value="UniProtKB-SubCell"/>
</dbReference>
<dbReference type="GO" id="GO:0000105">
    <property type="term" value="P:L-histidine biosynthetic process"/>
    <property type="evidence" value="ECO:0007669"/>
    <property type="project" value="UniProtKB-UniRule"/>
</dbReference>
<dbReference type="CDD" id="cd00773">
    <property type="entry name" value="HisRS-like_core"/>
    <property type="match status" value="1"/>
</dbReference>
<dbReference type="Gene3D" id="3.30.930.10">
    <property type="entry name" value="Bira Bifunctional Protein, Domain 2"/>
    <property type="match status" value="1"/>
</dbReference>
<dbReference type="HAMAP" id="MF_00125">
    <property type="entry name" value="HisZ"/>
    <property type="match status" value="1"/>
</dbReference>
<dbReference type="InterPro" id="IPR045864">
    <property type="entry name" value="aa-tRNA-synth_II/BPL/LPL"/>
</dbReference>
<dbReference type="InterPro" id="IPR041715">
    <property type="entry name" value="HisRS-like_core"/>
</dbReference>
<dbReference type="InterPro" id="IPR004516">
    <property type="entry name" value="HisRS/HisZ"/>
</dbReference>
<dbReference type="InterPro" id="IPR004517">
    <property type="entry name" value="HisZ"/>
</dbReference>
<dbReference type="NCBIfam" id="TIGR00443">
    <property type="entry name" value="hisZ_biosyn_reg"/>
    <property type="match status" value="1"/>
</dbReference>
<dbReference type="NCBIfam" id="NF008935">
    <property type="entry name" value="PRK12292.1-1"/>
    <property type="match status" value="1"/>
</dbReference>
<dbReference type="NCBIfam" id="NF008937">
    <property type="entry name" value="PRK12292.1-4"/>
    <property type="match status" value="1"/>
</dbReference>
<dbReference type="NCBIfam" id="NF009086">
    <property type="entry name" value="PRK12421.1"/>
    <property type="match status" value="1"/>
</dbReference>
<dbReference type="PANTHER" id="PTHR11476:SF7">
    <property type="entry name" value="HISTIDINE--TRNA LIGASE"/>
    <property type="match status" value="1"/>
</dbReference>
<dbReference type="PANTHER" id="PTHR11476">
    <property type="entry name" value="HISTIDYL-TRNA SYNTHETASE"/>
    <property type="match status" value="1"/>
</dbReference>
<dbReference type="Pfam" id="PF13393">
    <property type="entry name" value="tRNA-synt_His"/>
    <property type="match status" value="1"/>
</dbReference>
<dbReference type="PIRSF" id="PIRSF001549">
    <property type="entry name" value="His-tRNA_synth"/>
    <property type="match status" value="1"/>
</dbReference>
<dbReference type="SUPFAM" id="SSF55681">
    <property type="entry name" value="Class II aaRS and biotin synthetases"/>
    <property type="match status" value="1"/>
</dbReference>
<gene>
    <name evidence="1" type="primary">hisZ</name>
    <name type="ordered locus">Pmen_0640</name>
</gene>
<protein>
    <recommendedName>
        <fullName evidence="1">ATP phosphoribosyltransferase regulatory subunit</fullName>
    </recommendedName>
</protein>
<keyword id="KW-0028">Amino-acid biosynthesis</keyword>
<keyword id="KW-0963">Cytoplasm</keyword>
<keyword id="KW-0368">Histidine biosynthesis</keyword>